<feature type="chain" id="PRO_0000202716" description="Putative uncharacterized protein YGL218W">
    <location>
        <begin position="1"/>
        <end position="216"/>
    </location>
</feature>
<reference key="1">
    <citation type="journal article" date="1997" name="Yeast">
        <title>Sequence analysis of 203 kilobases from Saccharomyces cerevisiae chromosome VII.</title>
        <authorList>
            <person name="Rieger M."/>
            <person name="Brueckner M."/>
            <person name="Schaefer M."/>
            <person name="Mueller-Auer S."/>
        </authorList>
    </citation>
    <scope>NUCLEOTIDE SEQUENCE [GENOMIC DNA]</scope>
    <source>
        <strain>ATCC 204508 / S288c</strain>
    </source>
</reference>
<reference key="2">
    <citation type="journal article" date="1997" name="Nature">
        <title>The nucleotide sequence of Saccharomyces cerevisiae chromosome VII.</title>
        <authorList>
            <person name="Tettelin H."/>
            <person name="Agostoni-Carbone M.L."/>
            <person name="Albermann K."/>
            <person name="Albers M."/>
            <person name="Arroyo J."/>
            <person name="Backes U."/>
            <person name="Barreiros T."/>
            <person name="Bertani I."/>
            <person name="Bjourson A.J."/>
            <person name="Brueckner M."/>
            <person name="Bruschi C.V."/>
            <person name="Carignani G."/>
            <person name="Castagnoli L."/>
            <person name="Cerdan E."/>
            <person name="Clemente M.L."/>
            <person name="Coblenz A."/>
            <person name="Coglievina M."/>
            <person name="Coissac E."/>
            <person name="Defoor E."/>
            <person name="Del Bino S."/>
            <person name="Delius H."/>
            <person name="Delneri D."/>
            <person name="de Wergifosse P."/>
            <person name="Dujon B."/>
            <person name="Durand P."/>
            <person name="Entian K.-D."/>
            <person name="Eraso P."/>
            <person name="Escribano V."/>
            <person name="Fabiani L."/>
            <person name="Fartmann B."/>
            <person name="Feroli F."/>
            <person name="Feuermann M."/>
            <person name="Frontali L."/>
            <person name="Garcia-Gonzalez M."/>
            <person name="Garcia-Saez M.I."/>
            <person name="Goffeau A."/>
            <person name="Guerreiro P."/>
            <person name="Hani J."/>
            <person name="Hansen M."/>
            <person name="Hebling U."/>
            <person name="Hernandez K."/>
            <person name="Heumann K."/>
            <person name="Hilger F."/>
            <person name="Hofmann B."/>
            <person name="Indge K.J."/>
            <person name="James C.M."/>
            <person name="Klima R."/>
            <person name="Koetter P."/>
            <person name="Kramer B."/>
            <person name="Kramer W."/>
            <person name="Lauquin G."/>
            <person name="Leuther H."/>
            <person name="Louis E.J."/>
            <person name="Maillier E."/>
            <person name="Marconi A."/>
            <person name="Martegani E."/>
            <person name="Mazon M.J."/>
            <person name="Mazzoni C."/>
            <person name="McReynolds A.D.K."/>
            <person name="Melchioretto P."/>
            <person name="Mewes H.-W."/>
            <person name="Minenkova O."/>
            <person name="Mueller-Auer S."/>
            <person name="Nawrocki A."/>
            <person name="Netter P."/>
            <person name="Neu R."/>
            <person name="Nombela C."/>
            <person name="Oliver S.G."/>
            <person name="Panzeri L."/>
            <person name="Paoluzi S."/>
            <person name="Plevani P."/>
            <person name="Portetelle D."/>
            <person name="Portillo F."/>
            <person name="Potier S."/>
            <person name="Purnelle B."/>
            <person name="Rieger M."/>
            <person name="Riles L."/>
            <person name="Rinaldi T."/>
            <person name="Robben J."/>
            <person name="Rodrigues-Pousada C."/>
            <person name="Rodriguez-Belmonte E."/>
            <person name="Rodriguez-Torres A.M."/>
            <person name="Rose M."/>
            <person name="Ruzzi M."/>
            <person name="Saliola M."/>
            <person name="Sanchez-Perez M."/>
            <person name="Schaefer B."/>
            <person name="Schaefer M."/>
            <person name="Scharfe M."/>
            <person name="Schmidheini T."/>
            <person name="Schreer A."/>
            <person name="Skala J."/>
            <person name="Souciet J.-L."/>
            <person name="Steensma H.Y."/>
            <person name="Talla E."/>
            <person name="Thierry A."/>
            <person name="Vandenbol M."/>
            <person name="van der Aart Q.J.M."/>
            <person name="Van Dyck L."/>
            <person name="Vanoni M."/>
            <person name="Verhasselt P."/>
            <person name="Voet M."/>
            <person name="Volckaert G."/>
            <person name="Wambutt R."/>
            <person name="Watson M.D."/>
            <person name="Weber N."/>
            <person name="Wedler E."/>
            <person name="Wedler H."/>
            <person name="Wipfli P."/>
            <person name="Wolf K."/>
            <person name="Wright L.F."/>
            <person name="Zaccaria P."/>
            <person name="Zimmermann M."/>
            <person name="Zollner A."/>
            <person name="Kleine K."/>
        </authorList>
    </citation>
    <scope>NUCLEOTIDE SEQUENCE [LARGE SCALE GENOMIC DNA]</scope>
    <source>
        <strain>ATCC 204508 / S288c</strain>
    </source>
</reference>
<reference key="3">
    <citation type="journal article" date="2014" name="G3 (Bethesda)">
        <title>The reference genome sequence of Saccharomyces cerevisiae: Then and now.</title>
        <authorList>
            <person name="Engel S.R."/>
            <person name="Dietrich F.S."/>
            <person name="Fisk D.G."/>
            <person name="Binkley G."/>
            <person name="Balakrishnan R."/>
            <person name="Costanzo M.C."/>
            <person name="Dwight S.S."/>
            <person name="Hitz B.C."/>
            <person name="Karra K."/>
            <person name="Nash R.S."/>
            <person name="Weng S."/>
            <person name="Wong E.D."/>
            <person name="Lloyd P."/>
            <person name="Skrzypek M.S."/>
            <person name="Miyasato S.R."/>
            <person name="Simison M."/>
            <person name="Cherry J.M."/>
        </authorList>
    </citation>
    <scope>GENOME REANNOTATION</scope>
    <source>
        <strain>ATCC 204508 / S288c</strain>
    </source>
</reference>
<gene>
    <name type="ordered locus">YGL218W</name>
</gene>
<evidence type="ECO:0000305" key="1"/>
<evidence type="ECO:0000305" key="2">
    <source>
    </source>
</evidence>
<comment type="miscellaneous">
    <text evidence="1">Partially overlaps MDM34.</text>
</comment>
<comment type="caution">
    <text evidence="2">Product of a dubious gene prediction unlikely to encode a functional protein. Because of that it is not part of the S.cerevisiae S288c complete/reference proteome set.</text>
</comment>
<protein>
    <recommendedName>
        <fullName>Putative uncharacterized protein YGL218W</fullName>
    </recommendedName>
</protein>
<name>YGW8_YEAST</name>
<dbReference type="EMBL" id="Z72741">
    <property type="protein sequence ID" value="CAA96935.1"/>
    <property type="molecule type" value="Genomic_DNA"/>
</dbReference>
<dbReference type="PIR" id="S64240">
    <property type="entry name" value="S64240"/>
</dbReference>
<dbReference type="IntAct" id="P53084">
    <property type="interactions" value="1"/>
</dbReference>
<dbReference type="STRING" id="4932.YGL218W"/>
<dbReference type="PaxDb" id="4932-YGL218W"/>
<dbReference type="EnsemblFungi" id="YGL218W_mRNA">
    <property type="protein sequence ID" value="YGL218W"/>
    <property type="gene ID" value="YGL218W"/>
</dbReference>
<dbReference type="AGR" id="SGD:S000003186"/>
<dbReference type="SGD" id="S000003186">
    <property type="gene designation" value="YGL218W"/>
</dbReference>
<dbReference type="HOGENOM" id="CLU_092905_0_0_1"/>
<dbReference type="OMA" id="VCIRNIA"/>
<sequence length="216" mass="24153">MVLVLSPRLVNQFCDVLKIKEGRTSLNTTCMDSFSLLSMVLWRIFTEQSNLKSKSTSLKDIPIPGFFTKIFVMASSSMELNVIVIGIVNDPLLMSWGMVKLGVSCSLINKRFDSMTVCIRNIASLHEILQIPLARDLGCVIMSRSRISSCGIVGKSTFCTLIPLFKISNFFLDGEFKAVDNFSRIRSLKELSPNTASLNLNDMTMLKFLAVVFFLL</sequence>
<proteinExistence type="uncertain"/>
<accession>P53084</accession>
<organism>
    <name type="scientific">Saccharomyces cerevisiae (strain ATCC 204508 / S288c)</name>
    <name type="common">Baker's yeast</name>
    <dbReference type="NCBI Taxonomy" id="559292"/>
    <lineage>
        <taxon>Eukaryota</taxon>
        <taxon>Fungi</taxon>
        <taxon>Dikarya</taxon>
        <taxon>Ascomycota</taxon>
        <taxon>Saccharomycotina</taxon>
        <taxon>Saccharomycetes</taxon>
        <taxon>Saccharomycetales</taxon>
        <taxon>Saccharomycetaceae</taxon>
        <taxon>Saccharomyces</taxon>
    </lineage>
</organism>